<feature type="signal peptide" evidence="1">
    <location>
        <begin position="1"/>
        <end position="22"/>
    </location>
</feature>
<feature type="propeptide" id="PRO_0000457137">
    <location>
        <begin position="23"/>
        <end position="40"/>
    </location>
</feature>
<feature type="chain" id="PRO_5002953400" description="Palustrin-Ca">
    <location>
        <begin position="41"/>
        <end position="71"/>
    </location>
</feature>
<feature type="disulfide bond" evidence="2 8">
    <location>
        <begin position="63"/>
        <end position="69"/>
    </location>
</feature>
<feature type="sequence variant" evidence="6">
    <original>L</original>
    <variation>M</variation>
    <location>
        <position position="4"/>
    </location>
</feature>
<feature type="helix" evidence="9">
    <location>
        <begin position="46"/>
        <end position="65"/>
    </location>
</feature>
<feature type="strand" evidence="9">
    <location>
        <begin position="66"/>
        <end position="69"/>
    </location>
</feature>
<protein>
    <recommendedName>
        <fullName evidence="4">Palustrin-Ca</fullName>
    </recommendedName>
    <alternativeName>
        <fullName evidence="4">Host defense peptide</fullName>
        <shortName evidence="4">HDP</shortName>
    </alternativeName>
</protein>
<evidence type="ECO:0000255" key="1"/>
<evidence type="ECO:0000269" key="2">
    <source>
    </source>
</evidence>
<evidence type="ECO:0000269" key="3">
    <source ref="1"/>
</evidence>
<evidence type="ECO:0000303" key="4">
    <source>
    </source>
</evidence>
<evidence type="ECO:0000305" key="5">
    <source>
    </source>
</evidence>
<evidence type="ECO:0000305" key="6">
    <source ref="1"/>
</evidence>
<evidence type="ECO:0000312" key="7">
    <source>
        <dbReference type="EMBL" id="ACR84085.1"/>
    </source>
</evidence>
<evidence type="ECO:0007744" key="8">
    <source>
        <dbReference type="PDB" id="7P4X"/>
    </source>
</evidence>
<evidence type="ECO:0007829" key="9">
    <source>
        <dbReference type="PDB" id="7P4X"/>
    </source>
</evidence>
<dbReference type="EMBL" id="FJ830669">
    <property type="protein sequence ID" value="ACR84085.1"/>
    <property type="molecule type" value="mRNA"/>
</dbReference>
<dbReference type="EMBL" id="FJ830670">
    <property type="protein sequence ID" value="ACR84086.1"/>
    <property type="molecule type" value="mRNA"/>
</dbReference>
<dbReference type="PDB" id="7P4X">
    <property type="method" value="NMR"/>
    <property type="chains" value="A=41-71"/>
</dbReference>
<dbReference type="PDBsum" id="7P4X"/>
<dbReference type="SMR" id="C5IB03"/>
<dbReference type="GO" id="GO:0005576">
    <property type="term" value="C:extracellular region"/>
    <property type="evidence" value="ECO:0007669"/>
    <property type="project" value="UniProtKB-SubCell"/>
</dbReference>
<dbReference type="GO" id="GO:0016020">
    <property type="term" value="C:membrane"/>
    <property type="evidence" value="ECO:0007669"/>
    <property type="project" value="UniProtKB-KW"/>
</dbReference>
<dbReference type="GO" id="GO:0044218">
    <property type="term" value="C:other organism cell membrane"/>
    <property type="evidence" value="ECO:0007669"/>
    <property type="project" value="UniProtKB-KW"/>
</dbReference>
<dbReference type="GO" id="GO:0042742">
    <property type="term" value="P:defense response to bacterium"/>
    <property type="evidence" value="ECO:0007669"/>
    <property type="project" value="UniProtKB-KW"/>
</dbReference>
<dbReference type="GO" id="GO:0045087">
    <property type="term" value="P:innate immune response"/>
    <property type="evidence" value="ECO:0007669"/>
    <property type="project" value="UniProtKB-KW"/>
</dbReference>
<dbReference type="InterPro" id="IPR012521">
    <property type="entry name" value="Antimicrobial_frog_2"/>
</dbReference>
<dbReference type="InterPro" id="IPR004275">
    <property type="entry name" value="Frog_antimicrobial_propeptide"/>
</dbReference>
<dbReference type="Pfam" id="PF08023">
    <property type="entry name" value="Antimicrobial_2"/>
    <property type="match status" value="1"/>
</dbReference>
<dbReference type="Pfam" id="PF03032">
    <property type="entry name" value="FSAP_sig_propep"/>
    <property type="match status" value="1"/>
</dbReference>
<reference evidence="7" key="1">
    <citation type="book" date="2011" name="(In) Molecular cloning - selected applications in medicine and biology">
        <title>Effects of two novel peptides from skin of Lithobates catesbeianus on tumor cell morphology and proliferation.</title>
        <editorList>
            <person name="Brown G."/>
        </editorList>
        <authorList>
            <person name="Zhao R.-L."/>
            <person name="Han J.-Y."/>
            <person name="Han W.-Y."/>
            <person name="He H.-X."/>
            <person name="Ma J.-F."/>
        </authorList>
    </citation>
    <scope>NUCLEOTIDE SEQUENCE [MRNA]</scope>
    <scope>FUNCTION</scope>
    <scope>SYNTHESIS OF 41-71</scope>
    <source>
        <tissue>Skin</tissue>
    </source>
</reference>
<reference evidence="8" key="2">
    <citation type="journal article" date="2021" name="Sci. Rep.">
        <title>Conformation and membrane interaction studies of the potent antimicrobial and anticancer peptide palustrin-Ca.</title>
        <authorList>
            <person name="Timmons P.B."/>
            <person name="Hewage C.M."/>
        </authorList>
    </citation>
    <scope>STRUCTURE BY NMR OF 41-71</scope>
    <scope>DISULFIDE BOND</scope>
    <scope>MOLECULAR DYNAMICS SIMULATION</scope>
</reference>
<sequence length="71" mass="7847">MFTLKKSLLLLFFLGTISLSLCEQERDADGDEGEVEEVKRGFLDIIKDTGKEFAVKILNNLKCKLAGGCPP</sequence>
<organism>
    <name type="scientific">Aquarana catesbeiana</name>
    <name type="common">American bullfrog</name>
    <name type="synonym">Rana catesbeiana</name>
    <dbReference type="NCBI Taxonomy" id="8400"/>
    <lineage>
        <taxon>Eukaryota</taxon>
        <taxon>Metazoa</taxon>
        <taxon>Chordata</taxon>
        <taxon>Craniata</taxon>
        <taxon>Vertebrata</taxon>
        <taxon>Euteleostomi</taxon>
        <taxon>Amphibia</taxon>
        <taxon>Batrachia</taxon>
        <taxon>Anura</taxon>
        <taxon>Neobatrachia</taxon>
        <taxon>Ranoidea</taxon>
        <taxon>Ranidae</taxon>
        <taxon>Aquarana</taxon>
    </lineage>
</organism>
<proteinExistence type="evidence at protein level"/>
<accession>C5IB03</accession>
<accession>C5IB04</accession>
<name>PACA_AQUCT</name>
<comment type="function">
    <text evidence="2 3">Antibacterial peptide with amphipathic alpha-helical structure that exhibits potent broad-spectrum activity against Gram-positive and -negative bacteria (PubMed:34789753, Ref.1). It is active against Listeria ATCC 54004 (MIC=30 ug/ml), S.aureus ATCC 25923 (MIC=7.8 ug/ml), S.suis 2 CVCC 606 (MIC=31.25 ug/ml), B.subtilis ADB403 (30 ug/ml), K.pneumoniae ATCC 700603 (MIC=60 ug/ml) and P.aeruginosa ATCC 227853 (MIC=30 ug/ml) (Ref.1). Does not show activity against Salmonella ATCC 20020 and the fungus Candida albicans (Ref.1). Is also cytotoxic to HeLa cells at high concentrations (Ref.1). In addition, shows a strong antitumor activity but only a little hemolytic activity (Ref.1). Despite the presence of a Gly residue at position 10, this alpha-helical peptide remains relatively rigid, not exhibiting any significant flexibility during the molecular dynamics simulation (PubMed:34789753). The peptide shows a preference for a position parallel to the target membrane that suggests it exerts its antimicrobial activity through a non-pore-forming mechanism of action, such as the carpet model or the interfacial activity model (PubMed:34789753).</text>
</comment>
<comment type="subcellular location">
    <subcellularLocation>
        <location evidence="5 6">Secreted</location>
    </subcellularLocation>
    <subcellularLocation>
        <location evidence="5 6">Target cell membrane</location>
    </subcellularLocation>
    <text evidence="5">Shows a preference for a position parallel to the target cell membrane.</text>
</comment>
<comment type="tissue specificity">
    <text evidence="5">Expressed by the skin glands.</text>
</comment>
<comment type="similarity">
    <text evidence="1">Belongs to the frog skin active peptide (FSAP) family. Brevinin subfamily.</text>
</comment>
<keyword id="KW-0002">3D-structure</keyword>
<keyword id="KW-0878">Amphibian defense peptide</keyword>
<keyword id="KW-0044">Antibiotic</keyword>
<keyword id="KW-0929">Antimicrobial</keyword>
<keyword id="KW-0165">Cleavage on pair of basic residues</keyword>
<keyword id="KW-1015">Disulfide bond</keyword>
<keyword id="KW-0391">Immunity</keyword>
<keyword id="KW-0399">Innate immunity</keyword>
<keyword id="KW-0472">Membrane</keyword>
<keyword id="KW-0964">Secreted</keyword>
<keyword id="KW-0732">Signal</keyword>
<keyword id="KW-1052">Target cell membrane</keyword>
<keyword id="KW-1053">Target membrane</keyword>